<dbReference type="EMBL" id="CP000880">
    <property type="protein sequence ID" value="ABX24308.1"/>
    <property type="molecule type" value="Genomic_DNA"/>
</dbReference>
<dbReference type="BMRB" id="A9MQR4"/>
<dbReference type="SMR" id="A9MQR4"/>
<dbReference type="STRING" id="41514.SARI_04535"/>
<dbReference type="KEGG" id="ses:SARI_04535"/>
<dbReference type="HOGENOM" id="CLU_170994_0_0_6"/>
<dbReference type="Proteomes" id="UP000002084">
    <property type="component" value="Chromosome"/>
</dbReference>
<dbReference type="GO" id="GO:0005829">
    <property type="term" value="C:cytosol"/>
    <property type="evidence" value="ECO:0007669"/>
    <property type="project" value="TreeGrafter"/>
</dbReference>
<dbReference type="GO" id="GO:0005506">
    <property type="term" value="F:iron ion binding"/>
    <property type="evidence" value="ECO:0007669"/>
    <property type="project" value="UniProtKB-UniRule"/>
</dbReference>
<dbReference type="GO" id="GO:0034599">
    <property type="term" value="P:cellular response to oxidative stress"/>
    <property type="evidence" value="ECO:0007669"/>
    <property type="project" value="TreeGrafter"/>
</dbReference>
<dbReference type="FunFam" id="1.10.3880.10:FF:000001">
    <property type="entry name" value="Probable Fe(2+)-trafficking protein"/>
    <property type="match status" value="1"/>
</dbReference>
<dbReference type="Gene3D" id="1.10.3880.10">
    <property type="entry name" value="Fe(II) trafficking protein YggX"/>
    <property type="match status" value="1"/>
</dbReference>
<dbReference type="HAMAP" id="MF_00686">
    <property type="entry name" value="Fe_traffic_YggX"/>
    <property type="match status" value="1"/>
</dbReference>
<dbReference type="InterPro" id="IPR007457">
    <property type="entry name" value="Fe_traffick_prot_YggX"/>
</dbReference>
<dbReference type="InterPro" id="IPR036766">
    <property type="entry name" value="Fe_traffick_prot_YggX_sf"/>
</dbReference>
<dbReference type="NCBIfam" id="NF003817">
    <property type="entry name" value="PRK05408.1"/>
    <property type="match status" value="1"/>
</dbReference>
<dbReference type="PANTHER" id="PTHR36965">
    <property type="entry name" value="FE(2+)-TRAFFICKING PROTEIN-RELATED"/>
    <property type="match status" value="1"/>
</dbReference>
<dbReference type="PANTHER" id="PTHR36965:SF1">
    <property type="entry name" value="FE(2+)-TRAFFICKING PROTEIN-RELATED"/>
    <property type="match status" value="1"/>
</dbReference>
<dbReference type="Pfam" id="PF04362">
    <property type="entry name" value="Iron_traffic"/>
    <property type="match status" value="1"/>
</dbReference>
<dbReference type="PIRSF" id="PIRSF029827">
    <property type="entry name" value="Fe_traffic_YggX"/>
    <property type="match status" value="1"/>
</dbReference>
<dbReference type="SUPFAM" id="SSF111148">
    <property type="entry name" value="YggX-like"/>
    <property type="match status" value="1"/>
</dbReference>
<name>FETP_SALAR</name>
<reference key="1">
    <citation type="submission" date="2007-11" db="EMBL/GenBank/DDBJ databases">
        <authorList>
            <consortium name="The Salmonella enterica serovar Arizonae Genome Sequencing Project"/>
            <person name="McClelland M."/>
            <person name="Sanderson E.K."/>
            <person name="Porwollik S."/>
            <person name="Spieth J."/>
            <person name="Clifton W.S."/>
            <person name="Fulton R."/>
            <person name="Chunyan W."/>
            <person name="Wollam A."/>
            <person name="Shah N."/>
            <person name="Pepin K."/>
            <person name="Bhonagiri V."/>
            <person name="Nash W."/>
            <person name="Johnson M."/>
            <person name="Thiruvilangam P."/>
            <person name="Wilson R."/>
        </authorList>
    </citation>
    <scope>NUCLEOTIDE SEQUENCE [LARGE SCALE GENOMIC DNA]</scope>
    <source>
        <strain>ATCC BAA-731 / CDC346-86 / RSK2980</strain>
    </source>
</reference>
<protein>
    <recommendedName>
        <fullName evidence="1">Probable Fe(2+)-trafficking protein</fullName>
    </recommendedName>
</protein>
<evidence type="ECO:0000255" key="1">
    <source>
        <dbReference type="HAMAP-Rule" id="MF_00686"/>
    </source>
</evidence>
<sequence>MSRTIFCTYLQRDAEGQDFQLYPGELGKRIYNEISKDAWAQWQHKQTMLINEKKLNMMNAEHRKLLEQEMVSFLFEGKDVHIEGYTPEDKK</sequence>
<comment type="function">
    <text evidence="1">Could be a mediator in iron transactions between iron acquisition and iron-requiring processes, such as synthesis and/or repair of Fe-S clusters in biosynthetic enzymes.</text>
</comment>
<comment type="subunit">
    <text evidence="1">Monomer.</text>
</comment>
<comment type="similarity">
    <text evidence="1">Belongs to the Fe(2+)-trafficking protein family.</text>
</comment>
<feature type="chain" id="PRO_1000083082" description="Probable Fe(2+)-trafficking protein">
    <location>
        <begin position="1"/>
        <end position="91"/>
    </location>
</feature>
<proteinExistence type="inferred from homology"/>
<organism>
    <name type="scientific">Salmonella arizonae (strain ATCC BAA-731 / CDC346-86 / RSK2980)</name>
    <dbReference type="NCBI Taxonomy" id="41514"/>
    <lineage>
        <taxon>Bacteria</taxon>
        <taxon>Pseudomonadati</taxon>
        <taxon>Pseudomonadota</taxon>
        <taxon>Gammaproteobacteria</taxon>
        <taxon>Enterobacterales</taxon>
        <taxon>Enterobacteriaceae</taxon>
        <taxon>Salmonella</taxon>
    </lineage>
</organism>
<gene>
    <name evidence="1" type="primary">yggX</name>
    <name type="ordered locus">SARI_04535</name>
</gene>
<accession>A9MQR4</accession>
<keyword id="KW-0408">Iron</keyword>
<keyword id="KW-1185">Reference proteome</keyword>